<organism>
    <name type="scientific">Homo sapiens</name>
    <name type="common">Human</name>
    <dbReference type="NCBI Taxonomy" id="9606"/>
    <lineage>
        <taxon>Eukaryota</taxon>
        <taxon>Metazoa</taxon>
        <taxon>Chordata</taxon>
        <taxon>Craniata</taxon>
        <taxon>Vertebrata</taxon>
        <taxon>Euteleostomi</taxon>
        <taxon>Mammalia</taxon>
        <taxon>Eutheria</taxon>
        <taxon>Euarchontoglires</taxon>
        <taxon>Primates</taxon>
        <taxon>Haplorrhini</taxon>
        <taxon>Catarrhini</taxon>
        <taxon>Hominidae</taxon>
        <taxon>Homo</taxon>
    </lineage>
</organism>
<sequence>MQAEAADWFSSMPFQKHVYYPLASGPEGPDVAVAAAAAGAASMACAPPSAASGPLPFFQFRPRLESVDWRRLSAIDVDKVAGAVDVLTLQENIMNITFCKLEDEKCPHCQSGVDPVLLKLIRLAQFTIEYLLHSQEFLTSQLHTLEERLRLSHCDGEQSKKLLTKQAGEIKTLKEECKRRKKMISTQQLMIEAKANYYQCHFCDKAFMNQAFLQSHIQRRHTEENSHFEYQKNAQIEKLRSEIVVLKEELQLTRSELEAAHHASAVRFSKEYEMQKTKEEDFLKLFDRWKEEEKEKLVDEMEKVKEMFMKEFKELTSKNSALEYQLSEIQKSNMQIKSNIGTLKDAHEFKEDRSPYPQDFHNVMQLLDSQESKWTARVQAIHQEHKKEKGRLLSHIEKLRTSMIDDLNASNVFYKKRIEELGQRLQEQNELIITQRQQIKDFTCNPLNSISEPKGNPLAWQAFESQPAAPAVPMNAPALHTLETKSSLPMVHEQAFSSHILEPIEELSEEEKGRENEQKLNNNKMHLRKALKSNSSLTKGLRTMVEQNLMEKLETLGINADIRGISSDQLHRVLKSVESERHKQEREIPNFHQIREFLEHQVSCKIEEKALLSSDQCSVSQMDTLSTGEVPKMIQLPSKNRQLIRQKAVSTDRTSVPKIKKNVMEDPFPRKSSTITTPPFSSEEEQEDDDLIRAYASPGPLPVPPPQNKGSFGKNTVKSDADGTEGSEIEDTDDSPKPAGVAVKTPTEKVEKMFPHRKNVNKPVGGTNVPEMFIKKEELQELKCADVEDEDWDISSLEEEISLGKKSGKEQKEPPPAKNEPHFAHVLNAWGAFNPKGPKGEGLQENESSTLKSSLVTVTDWSDTSDV</sequence>
<proteinExistence type="evidence at protein level"/>
<comment type="function">
    <text evidence="1 8 9 11 12 13">Molecular adapter that recruits protein complexes required for cilium assembly and function to the cilium basal body (PubMed:19852954, PubMed:23955340, PubMed:27979967, PubMed:32051257). At the exit of mitosis, localizes to the basal body and ciliary base of the forming primary cilium where it recruits and activates RAB8A to direct vesicle-mediated transport of proteins to the cilium (By similarity). Also recruits the BBSome, a complex involved in cilium biogenesis, by bridging it to PCM1 at the centriolar satellites of the cilium (PubMed:27979967). It is also required for the recruitment to the cilium basal body of the intraflagellar transport (IFT) machinery as well as the ciliary appendage proteins CEP164 and NINEIN (By similarity). Functions as a regulator of Hedgehog signaling both through its role in cilium assembly but also probably through its ability to retain GLI3 within the cytoplasm (By similarity). It is involved in spermatogenesis through its role in organization of the basal body and assembly of the sperm flagellum (PubMed:32051257). Also indirectly involved in heart development through its function in ciliogenesis (PubMed:31118289).</text>
</comment>
<comment type="subunit">
    <text evidence="1 5 6 9 10 11">Interacts with DAZ1 (PubMed:12511597, PubMed:15081113). Interacts with the BBSome; recruits the BBSome to centriolar satellites of the cilium (PubMed:27979967). Interacts with PCM1; localizes DZIP1 and the associated BBSome to centriolar satellites (PubMed:27979967). Interacts with RAB8A (GDP-bound inactive form); recruits RAB8A to the basal body of the cilium and prevents its inhibition by GDI2 (PubMed:25860027). Interacts with GDI2; negatively regulates the interaction of GDI2 with GDP-bound RAB8A (PubMed:25860027). Interacts with GLI3; retains GLI3 within the cytoplasm (PubMed:23955340). Interacts with CEP164 (By similarity). Interacts with IFT88 (By similarity).</text>
</comment>
<comment type="interaction">
    <interactant intactId="EBI-998108">
        <id>Q86YF9</id>
    </interactant>
    <interactant intactId="EBI-352851">
        <id>Q9Y383</id>
        <label>LUC7L2</label>
    </interactant>
    <organismsDiffer>false</organismsDiffer>
    <experiments>3</experiments>
</comment>
<comment type="interaction">
    <interactant intactId="EBI-998108">
        <id>Q86YF9</id>
    </interactant>
    <interactant intactId="EBI-1757866">
        <id>P00540</id>
        <label>MOS</label>
    </interactant>
    <organismsDiffer>false</organismsDiffer>
    <experiments>3</experiments>
</comment>
<comment type="interaction">
    <interactant intactId="EBI-998108">
        <id>Q86YF9</id>
    </interactant>
    <interactant intactId="EBI-2557469">
        <id>Q6NYC8</id>
        <label>PPP1R18</label>
    </interactant>
    <organismsDiffer>false</organismsDiffer>
    <experiments>3</experiments>
</comment>
<comment type="interaction">
    <interactant intactId="EBI-998108">
        <id>Q86YF9</id>
    </interactant>
    <interactant intactId="EBI-641666">
        <id>Q15172</id>
        <label>PPP2R5A</label>
    </interactant>
    <organismsDiffer>false</organismsDiffer>
    <experiments>4</experiments>
</comment>
<comment type="interaction">
    <interactant intactId="EBI-998108">
        <id>Q86YF9</id>
    </interactant>
    <interactant intactId="EBI-968374">
        <id>Q16537</id>
        <label>PPP2R5E</label>
    </interactant>
    <organismsDiffer>false</organismsDiffer>
    <experiments>3</experiments>
</comment>
<comment type="interaction">
    <interactant intactId="EBI-998108">
        <id>Q86YF9</id>
    </interactant>
    <interactant intactId="EBI-5280197">
        <id>O75400-2</id>
        <label>PRPF40A</label>
    </interactant>
    <organismsDiffer>false</organismsDiffer>
    <experiments>3</experiments>
</comment>
<comment type="interaction">
    <interactant intactId="EBI-998108">
        <id>Q86YF9</id>
    </interactant>
    <interactant intactId="EBI-949753">
        <id>Q63HR2</id>
        <label>TNS2</label>
    </interactant>
    <organismsDiffer>false</organismsDiffer>
    <experiments>3</experiments>
</comment>
<comment type="subcellular location">
    <subcellularLocation>
        <location evidence="8">Cytoplasm</location>
        <location evidence="8">Cytoskeleton</location>
        <location evidence="8">Cilium basal body</location>
    </subcellularLocation>
    <subcellularLocation>
        <location evidence="11">Cytoplasm</location>
        <location evidence="11">Cytoskeleton</location>
        <location evidence="11">Microtubule organizing center</location>
        <location evidence="11">Centrosome</location>
        <location evidence="11">Centriolar satellite</location>
    </subcellularLocation>
    <subcellularLocation>
        <location evidence="8">Cytoplasm</location>
        <location evidence="8">Cytoskeleton</location>
        <location evidence="8">Microtubule organizing center</location>
        <location evidence="8">Centrosome</location>
        <location evidence="8">Centriole</location>
    </subcellularLocation>
    <subcellularLocation>
        <location evidence="6">Nucleus</location>
    </subcellularLocation>
    <subcellularLocation>
        <location evidence="1">Nucleus speckle</location>
    </subcellularLocation>
    <subcellularLocation>
        <location evidence="6">Cytoplasm</location>
    </subcellularLocation>
    <text evidence="1 8">Localizes to the centriole in cells lacking cilia and to the cilium basal body in ciliated cells (PubMed:19852954). At the exit of mitosis, when the primary cilium is reassembled in daughter cells, localizes at the mother centriole that acts as the basal body of the assembling primary cilium and also accumulates at the ciliary base that constitutes a diffusion barrier for ciliary proteins (By similarity).</text>
</comment>
<comment type="alternative products">
    <event type="alternative splicing"/>
    <isoform>
        <id>Q86YF9-1</id>
        <name>1</name>
        <name evidence="16">DZIPt2</name>
        <name evidence="16">DZIP testis2</name>
        <sequence type="displayed"/>
    </isoform>
    <isoform>
        <id>Q86YF9-2</id>
        <name>2</name>
        <name evidence="16">DZIPt1</name>
        <name evidence="16">DZIP testis1</name>
        <sequence type="described" ref="VSP_010965"/>
    </isoform>
    <isoform>
        <id>Q86YF9-3</id>
        <name>3</name>
        <name evidence="16">DZIPb</name>
        <name evidence="16">DZIP brain</name>
        <sequence type="described" ref="VSP_010962 VSP_010963 VSP_010964"/>
    </isoform>
</comment>
<comment type="tissue specificity">
    <text evidence="6 13">Predominantly expressed in testis (at protein level) (PubMed:15081113, PubMed:32051257). Also expressed in fetal brain, adult oocytes and ovary (PubMed:15081113). Expressed in undifferentiated ES cells (PubMed:15081113). In testis, it is specifically expressed in germ cells (at protein level) (PubMed:15081113, PubMed:32051257). Expressed in mature germ cells and secondary spermatocytes, while it is weakly or not expressed in primary spermatocytes (PubMed:15081113).</text>
</comment>
<comment type="PTM">
    <text evidence="1">Phosphorylation at Ser-226 by PLK1 before mitosis prevents interaction with PCM1 and localization to centriolar satellites. Thereby, it negatively regulates the localization of the BBSome to centriolar satellites.</text>
</comment>
<comment type="disease" evidence="12">
    <disease id="DI-05973">
        <name>Mitral valve prolapse 3</name>
        <acronym>MVP3</acronym>
        <description>An autosomal dominant form of mitral valve prolapse, a valvular heart disease characterized by abnormally elongated and thickened mitral valve leaflets, that typically show myxomatous degeneration with increased leaflet compliance. It is associated with mitral regurgitation. Myxomatous mitral valves have an abnormal layered architecture characterized by loose collagen in fibrosa, expanded spongiosa strongly positive for proteoglycans, and disrupted elastin in atrialis. In classic mitral valve prolapse, leaflets are at least 5 mm thick, whereas in the non-classic form, they are less than 5 mm thick. Severe classic mitral valve prolapse is strongly associated with arrhythmias, endocarditis, heart failure, and need for valve surgery.</description>
        <dbReference type="MIM" id="610840"/>
    </disease>
    <text>The disease is caused by variants affecting the gene represented in this entry.</text>
</comment>
<comment type="disease" evidence="13">
    <disease id="DI-05967">
        <name>Spermatogenic failure 47</name>
        <acronym>SPGF47</acronym>
        <description>An autosomal recessive infertility disorder caused by spermatogenesis defects resulting in asthenoteratozoospermia. SPGF47 is characterized by reduced sperm concentrations and immotile spermatozoa, with short or absent flagella as well as centriolar abnormalities.</description>
        <dbReference type="MIM" id="619102"/>
    </disease>
    <text>The disease is caused by variants affecting the gene represented in this entry.</text>
</comment>
<comment type="similarity">
    <text evidence="17">Belongs to the DZIP C2H2-type zinc-finger protein family.</text>
</comment>
<comment type="sequence caution" evidence="17">
    <conflict type="miscellaneous discrepancy">
        <sequence resource="EMBL-CDS" id="AAL36978"/>
    </conflict>
    <text>Contaminating sequence. Potential poly-A sequence.</text>
</comment>
<comment type="sequence caution" evidence="17">
    <conflict type="erroneous initiation">
        <sequence resource="EMBL-CDS" id="BAA76840"/>
    </conflict>
    <text>Extended N-terminus.</text>
</comment>
<comment type="sequence caution" evidence="17">
    <conflict type="erroneous initiation">
        <sequence resource="EMBL-CDS" id="CAB43211"/>
    </conflict>
    <text>Truncated N-terminus.</text>
</comment>
<evidence type="ECO:0000250" key="1">
    <source>
        <dbReference type="UniProtKB" id="Q8BMD2"/>
    </source>
</evidence>
<evidence type="ECO:0000255" key="2"/>
<evidence type="ECO:0000255" key="3">
    <source>
        <dbReference type="PROSITE-ProRule" id="PRU00042"/>
    </source>
</evidence>
<evidence type="ECO:0000256" key="4">
    <source>
        <dbReference type="SAM" id="MobiDB-lite"/>
    </source>
</evidence>
<evidence type="ECO:0000269" key="5">
    <source>
    </source>
</evidence>
<evidence type="ECO:0000269" key="6">
    <source>
    </source>
</evidence>
<evidence type="ECO:0000269" key="7">
    <source>
    </source>
</evidence>
<evidence type="ECO:0000269" key="8">
    <source>
    </source>
</evidence>
<evidence type="ECO:0000269" key="9">
    <source>
    </source>
</evidence>
<evidence type="ECO:0000269" key="10">
    <source>
    </source>
</evidence>
<evidence type="ECO:0000269" key="11">
    <source>
    </source>
</evidence>
<evidence type="ECO:0000269" key="12">
    <source>
    </source>
</evidence>
<evidence type="ECO:0000269" key="13">
    <source>
    </source>
</evidence>
<evidence type="ECO:0000303" key="14">
    <source>
    </source>
</evidence>
<evidence type="ECO:0000303" key="15">
    <source>
    </source>
</evidence>
<evidence type="ECO:0000303" key="16">
    <source>
    </source>
</evidence>
<evidence type="ECO:0000305" key="17"/>
<evidence type="ECO:0000305" key="18">
    <source>
    </source>
</evidence>
<evidence type="ECO:0000312" key="19">
    <source>
        <dbReference type="HGNC" id="HGNC:20908"/>
    </source>
</evidence>
<name>DZIP1_HUMAN</name>
<gene>
    <name evidence="19" type="primary">DZIP1</name>
    <name type="synonym">DZIP</name>
    <name type="synonym">DZIP2</name>
    <name type="synonym">KIAA0996</name>
</gene>
<dbReference type="EMBL" id="AF272347">
    <property type="protein sequence ID" value="AAL36978.1"/>
    <property type="status" value="ALT_SEQ"/>
    <property type="molecule type" value="mRNA"/>
</dbReference>
<dbReference type="EMBL" id="AF272348">
    <property type="protein sequence ID" value="AAL36979.1"/>
    <property type="molecule type" value="mRNA"/>
</dbReference>
<dbReference type="EMBL" id="AB023213">
    <property type="protein sequence ID" value="BAA76840.2"/>
    <property type="status" value="ALT_INIT"/>
    <property type="molecule type" value="mRNA"/>
</dbReference>
<dbReference type="EMBL" id="AL139376">
    <property type="status" value="NOT_ANNOTATED_CDS"/>
    <property type="molecule type" value="Genomic_DNA"/>
</dbReference>
<dbReference type="EMBL" id="BC041804">
    <property type="protein sequence ID" value="AAH41804.1"/>
    <property type="molecule type" value="mRNA"/>
</dbReference>
<dbReference type="EMBL" id="AL049931">
    <property type="protein sequence ID" value="CAB43211.2"/>
    <property type="status" value="ALT_INIT"/>
    <property type="molecule type" value="mRNA"/>
</dbReference>
<dbReference type="CCDS" id="CCDS9477.1">
    <molecule id="Q86YF9-2"/>
</dbReference>
<dbReference type="CCDS" id="CCDS9478.1">
    <molecule id="Q86YF9-1"/>
</dbReference>
<dbReference type="PIR" id="T08668">
    <property type="entry name" value="T08668"/>
</dbReference>
<dbReference type="RefSeq" id="NP_055749.1">
    <molecule id="Q86YF9-2"/>
    <property type="nucleotide sequence ID" value="NM_014934.5"/>
</dbReference>
<dbReference type="RefSeq" id="NP_945319.1">
    <molecule id="Q86YF9-1"/>
    <property type="nucleotide sequence ID" value="NM_198968.4"/>
</dbReference>
<dbReference type="RefSeq" id="XP_047286128.1">
    <molecule id="Q86YF9-1"/>
    <property type="nucleotide sequence ID" value="XM_047430172.1"/>
</dbReference>
<dbReference type="RefSeq" id="XP_054230233.1">
    <molecule id="Q86YF9-1"/>
    <property type="nucleotide sequence ID" value="XM_054374258.1"/>
</dbReference>
<dbReference type="SMR" id="Q86YF9"/>
<dbReference type="BioGRID" id="116540">
    <property type="interactions" value="42"/>
</dbReference>
<dbReference type="CORUM" id="Q86YF9"/>
<dbReference type="DIP" id="DIP-35710N"/>
<dbReference type="FunCoup" id="Q86YF9">
    <property type="interactions" value="816"/>
</dbReference>
<dbReference type="IntAct" id="Q86YF9">
    <property type="interactions" value="32"/>
</dbReference>
<dbReference type="MINT" id="Q86YF9"/>
<dbReference type="STRING" id="9606.ENSP00000257312"/>
<dbReference type="TCDB" id="3.A.33.1.1">
    <property type="family name" value="the bbsome complex (bbsome) family"/>
</dbReference>
<dbReference type="GlyGen" id="Q86YF9">
    <property type="glycosylation" value="1 site, 1 O-linked glycan (1 site)"/>
</dbReference>
<dbReference type="iPTMnet" id="Q86YF9"/>
<dbReference type="PhosphoSitePlus" id="Q86YF9"/>
<dbReference type="BioMuta" id="DZIP1"/>
<dbReference type="DMDM" id="50400485"/>
<dbReference type="jPOST" id="Q86YF9"/>
<dbReference type="MassIVE" id="Q86YF9"/>
<dbReference type="PaxDb" id="9606-ENSP00000257312"/>
<dbReference type="PeptideAtlas" id="Q86YF9"/>
<dbReference type="ProteomicsDB" id="70410">
    <molecule id="Q86YF9-1"/>
</dbReference>
<dbReference type="ProteomicsDB" id="70411">
    <molecule id="Q86YF9-2"/>
</dbReference>
<dbReference type="ProteomicsDB" id="70412">
    <molecule id="Q86YF9-3"/>
</dbReference>
<dbReference type="Antibodypedia" id="24832">
    <property type="antibodies" value="126 antibodies from 22 providers"/>
</dbReference>
<dbReference type="DNASU" id="22873"/>
<dbReference type="Ensembl" id="ENST00000347108.7">
    <molecule id="Q86YF9-1"/>
    <property type="protein sequence ID" value="ENSP00000257312.5"/>
    <property type="gene ID" value="ENSG00000134874.18"/>
</dbReference>
<dbReference type="Ensembl" id="ENST00000361156.7">
    <molecule id="Q86YF9-2"/>
    <property type="protein sequence ID" value="ENSP00000355018.3"/>
    <property type="gene ID" value="ENSG00000134874.18"/>
</dbReference>
<dbReference type="Ensembl" id="ENST00000361396.6">
    <molecule id="Q86YF9-2"/>
    <property type="protein sequence ID" value="ENSP00000355175.2"/>
    <property type="gene ID" value="ENSG00000134874.18"/>
</dbReference>
<dbReference type="Ensembl" id="ENST00000376829.7">
    <molecule id="Q86YF9-1"/>
    <property type="protein sequence ID" value="ENSP00000366025.2"/>
    <property type="gene ID" value="ENSG00000134874.18"/>
</dbReference>
<dbReference type="Ensembl" id="ENST00000466569.1">
    <molecule id="Q86YF9-3"/>
    <property type="protein sequence ID" value="ENSP00000431168.1"/>
    <property type="gene ID" value="ENSG00000134874.18"/>
</dbReference>
<dbReference type="GeneID" id="22873"/>
<dbReference type="KEGG" id="hsa:22873"/>
<dbReference type="MANE-Select" id="ENST00000376829.7">
    <property type="protein sequence ID" value="ENSP00000366025.2"/>
    <property type="RefSeq nucleotide sequence ID" value="NM_198968.4"/>
    <property type="RefSeq protein sequence ID" value="NP_945319.1"/>
</dbReference>
<dbReference type="UCSC" id="uc001vmk.5">
    <molecule id="Q86YF9-1"/>
    <property type="organism name" value="human"/>
</dbReference>
<dbReference type="AGR" id="HGNC:20908"/>
<dbReference type="CTD" id="22873"/>
<dbReference type="DisGeNET" id="22873"/>
<dbReference type="GeneCards" id="DZIP1"/>
<dbReference type="HGNC" id="HGNC:20908">
    <property type="gene designation" value="DZIP1"/>
</dbReference>
<dbReference type="HPA" id="ENSG00000134874">
    <property type="expression patterns" value="Tissue enhanced (brain)"/>
</dbReference>
<dbReference type="MalaCards" id="DZIP1"/>
<dbReference type="MIM" id="608671">
    <property type="type" value="gene"/>
</dbReference>
<dbReference type="MIM" id="610840">
    <property type="type" value="phenotype"/>
</dbReference>
<dbReference type="MIM" id="619102">
    <property type="type" value="phenotype"/>
</dbReference>
<dbReference type="neXtProt" id="NX_Q86YF9"/>
<dbReference type="OpenTargets" id="ENSG00000134874"/>
<dbReference type="PharmGKB" id="PA134960194"/>
<dbReference type="VEuPathDB" id="HostDB:ENSG00000134874"/>
<dbReference type="eggNOG" id="ENOG502QRAI">
    <property type="taxonomic scope" value="Eukaryota"/>
</dbReference>
<dbReference type="GeneTree" id="ENSGT00940000156862"/>
<dbReference type="HOGENOM" id="CLU_018051_1_0_1"/>
<dbReference type="InParanoid" id="Q86YF9"/>
<dbReference type="OMA" id="TWQAFES"/>
<dbReference type="OrthoDB" id="515971at2759"/>
<dbReference type="PAN-GO" id="Q86YF9">
    <property type="GO annotations" value="3 GO annotations based on evolutionary models"/>
</dbReference>
<dbReference type="PhylomeDB" id="Q86YF9"/>
<dbReference type="TreeFam" id="TF330044"/>
<dbReference type="PathwayCommons" id="Q86YF9"/>
<dbReference type="Reactome" id="R-HSA-5632684">
    <property type="pathway name" value="Hedgehog 'on' state"/>
</dbReference>
<dbReference type="SignaLink" id="Q86YF9"/>
<dbReference type="BioGRID-ORCS" id="22873">
    <property type="hits" value="9 hits in 1154 CRISPR screens"/>
</dbReference>
<dbReference type="CD-CODE" id="DEE660B4">
    <property type="entry name" value="Stress granule"/>
</dbReference>
<dbReference type="ChiTaRS" id="DZIP1">
    <property type="organism name" value="human"/>
</dbReference>
<dbReference type="GeneWiki" id="DZIP1"/>
<dbReference type="GenomeRNAi" id="22873"/>
<dbReference type="Pharos" id="Q86YF9">
    <property type="development level" value="Tbio"/>
</dbReference>
<dbReference type="PRO" id="PR:Q86YF9"/>
<dbReference type="Proteomes" id="UP000005640">
    <property type="component" value="Chromosome 13"/>
</dbReference>
<dbReference type="RNAct" id="Q86YF9">
    <property type="molecule type" value="protein"/>
</dbReference>
<dbReference type="Bgee" id="ENSG00000134874">
    <property type="expression patterns" value="Expressed in sperm and 183 other cell types or tissues"/>
</dbReference>
<dbReference type="GO" id="GO:0034451">
    <property type="term" value="C:centriolar satellite"/>
    <property type="evidence" value="ECO:0000314"/>
    <property type="project" value="UniProtKB"/>
</dbReference>
<dbReference type="GO" id="GO:0005814">
    <property type="term" value="C:centriole"/>
    <property type="evidence" value="ECO:0007669"/>
    <property type="project" value="UniProtKB-SubCell"/>
</dbReference>
<dbReference type="GO" id="GO:0005813">
    <property type="term" value="C:centrosome"/>
    <property type="evidence" value="ECO:0000314"/>
    <property type="project" value="HPA"/>
</dbReference>
<dbReference type="GO" id="GO:0036064">
    <property type="term" value="C:ciliary basal body"/>
    <property type="evidence" value="ECO:0000314"/>
    <property type="project" value="BHF-UCL"/>
</dbReference>
<dbReference type="GO" id="GO:0097546">
    <property type="term" value="C:ciliary base"/>
    <property type="evidence" value="ECO:0007669"/>
    <property type="project" value="Ensembl"/>
</dbReference>
<dbReference type="GO" id="GO:0097539">
    <property type="term" value="C:ciliary transition fiber"/>
    <property type="evidence" value="ECO:0007669"/>
    <property type="project" value="Ensembl"/>
</dbReference>
<dbReference type="GO" id="GO:0005737">
    <property type="term" value="C:cytoplasm"/>
    <property type="evidence" value="ECO:0000314"/>
    <property type="project" value="UniProtKB"/>
</dbReference>
<dbReference type="GO" id="GO:0005829">
    <property type="term" value="C:cytosol"/>
    <property type="evidence" value="ECO:0000314"/>
    <property type="project" value="HPA"/>
</dbReference>
<dbReference type="GO" id="GO:0043231">
    <property type="term" value="C:intracellular membrane-bounded organelle"/>
    <property type="evidence" value="ECO:0000314"/>
    <property type="project" value="HPA"/>
</dbReference>
<dbReference type="GO" id="GO:0016607">
    <property type="term" value="C:nuclear speck"/>
    <property type="evidence" value="ECO:0007669"/>
    <property type="project" value="UniProtKB-SubCell"/>
</dbReference>
<dbReference type="GO" id="GO:0005654">
    <property type="term" value="C:nucleoplasm"/>
    <property type="evidence" value="ECO:0000314"/>
    <property type="project" value="HPA"/>
</dbReference>
<dbReference type="GO" id="GO:0005634">
    <property type="term" value="C:nucleus"/>
    <property type="evidence" value="ECO:0000314"/>
    <property type="project" value="UniProtKB"/>
</dbReference>
<dbReference type="GO" id="GO:0062063">
    <property type="term" value="F:BBSome binding"/>
    <property type="evidence" value="ECO:0000314"/>
    <property type="project" value="UniProtKB"/>
</dbReference>
<dbReference type="GO" id="GO:0060090">
    <property type="term" value="F:molecular adaptor activity"/>
    <property type="evidence" value="ECO:0000315"/>
    <property type="project" value="UniProtKB"/>
</dbReference>
<dbReference type="GO" id="GO:0008270">
    <property type="term" value="F:zinc ion binding"/>
    <property type="evidence" value="ECO:0007669"/>
    <property type="project" value="UniProtKB-KW"/>
</dbReference>
<dbReference type="GO" id="GO:0032053">
    <property type="term" value="P:ciliary basal body organization"/>
    <property type="evidence" value="ECO:0000315"/>
    <property type="project" value="UniProtKB"/>
</dbReference>
<dbReference type="GO" id="GO:0060271">
    <property type="term" value="P:cilium assembly"/>
    <property type="evidence" value="ECO:0000315"/>
    <property type="project" value="BHF-UCL"/>
</dbReference>
<dbReference type="GO" id="GO:0051649">
    <property type="term" value="P:establishment of localization in cell"/>
    <property type="evidence" value="ECO:0007669"/>
    <property type="project" value="Ensembl"/>
</dbReference>
<dbReference type="GO" id="GO:0045184">
    <property type="term" value="P:establishment of protein localization"/>
    <property type="evidence" value="ECO:0007669"/>
    <property type="project" value="Ensembl"/>
</dbReference>
<dbReference type="GO" id="GO:0007281">
    <property type="term" value="P:germ cell development"/>
    <property type="evidence" value="ECO:0000270"/>
    <property type="project" value="UniProtKB"/>
</dbReference>
<dbReference type="GO" id="GO:0007507">
    <property type="term" value="P:heart development"/>
    <property type="evidence" value="ECO:0000315"/>
    <property type="project" value="UniProtKB"/>
</dbReference>
<dbReference type="GO" id="GO:0045724">
    <property type="term" value="P:positive regulation of cilium assembly"/>
    <property type="evidence" value="ECO:0007669"/>
    <property type="project" value="Ensembl"/>
</dbReference>
<dbReference type="GO" id="GO:1903566">
    <property type="term" value="P:positive regulation of protein localization to cilium"/>
    <property type="evidence" value="ECO:0007669"/>
    <property type="project" value="Ensembl"/>
</dbReference>
<dbReference type="GO" id="GO:0061512">
    <property type="term" value="P:protein localization to cilium"/>
    <property type="evidence" value="ECO:0007669"/>
    <property type="project" value="Ensembl"/>
</dbReference>
<dbReference type="GO" id="GO:0140706">
    <property type="term" value="P:protein-containing complex localization to centriolar satellite"/>
    <property type="evidence" value="ECO:0000314"/>
    <property type="project" value="UniProtKB"/>
</dbReference>
<dbReference type="GO" id="GO:0007224">
    <property type="term" value="P:smoothened signaling pathway"/>
    <property type="evidence" value="ECO:0007669"/>
    <property type="project" value="Ensembl"/>
</dbReference>
<dbReference type="GO" id="GO:0120316">
    <property type="term" value="P:sperm flagellum assembly"/>
    <property type="evidence" value="ECO:0000315"/>
    <property type="project" value="UniProtKB"/>
</dbReference>
<dbReference type="GO" id="GO:0007283">
    <property type="term" value="P:spermatogenesis"/>
    <property type="evidence" value="ECO:0000315"/>
    <property type="project" value="UniProtKB"/>
</dbReference>
<dbReference type="FunFam" id="3.30.160.60:FF:001591">
    <property type="entry name" value="DAZ interacting zinc finger protein 1"/>
    <property type="match status" value="1"/>
</dbReference>
<dbReference type="Gene3D" id="3.30.160.60">
    <property type="entry name" value="Classic Zinc Finger"/>
    <property type="match status" value="1"/>
</dbReference>
<dbReference type="InterPro" id="IPR032714">
    <property type="entry name" value="DZIP1_N"/>
</dbReference>
<dbReference type="InterPro" id="IPR051241">
    <property type="entry name" value="DZIP_RILPL"/>
</dbReference>
<dbReference type="InterPro" id="IPR013087">
    <property type="entry name" value="Znf_C2H2_type"/>
</dbReference>
<dbReference type="PANTHER" id="PTHR21502:SF5">
    <property type="entry name" value="CILIUM ASSEMBLY PROTEIN DZIP1"/>
    <property type="match status" value="1"/>
</dbReference>
<dbReference type="PANTHER" id="PTHR21502">
    <property type="entry name" value="ZINC FINGER PROTEIN DZIP1"/>
    <property type="match status" value="1"/>
</dbReference>
<dbReference type="Pfam" id="PF13815">
    <property type="entry name" value="Dzip-like_N"/>
    <property type="match status" value="1"/>
</dbReference>
<dbReference type="SMART" id="SM00355">
    <property type="entry name" value="ZnF_C2H2"/>
    <property type="match status" value="1"/>
</dbReference>
<dbReference type="PROSITE" id="PS00028">
    <property type="entry name" value="ZINC_FINGER_C2H2_1"/>
    <property type="match status" value="1"/>
</dbReference>
<dbReference type="PROSITE" id="PS50157">
    <property type="entry name" value="ZINC_FINGER_C2H2_2"/>
    <property type="match status" value="1"/>
</dbReference>
<protein>
    <recommendedName>
        <fullName evidence="18">Cilium assembly protein DZIP1</fullName>
    </recommendedName>
    <alternativeName>
        <fullName evidence="15">DAZ-interacting protein 1/2</fullName>
    </alternativeName>
    <alternativeName>
        <fullName evidence="19">DAZ-interacting zinc finger protein 1</fullName>
    </alternativeName>
</protein>
<feature type="chain" id="PRO_0000047106" description="Cilium assembly protein DZIP1">
    <location>
        <begin position="1"/>
        <end position="867"/>
    </location>
</feature>
<feature type="zinc finger region" description="C2H2-type" evidence="3">
    <location>
        <begin position="198"/>
        <end position="221"/>
    </location>
</feature>
<feature type="region of interest" description="Mediates interaction with GLI3 and localization to the cilium basal body" evidence="1">
    <location>
        <begin position="12"/>
        <end position="367"/>
    </location>
</feature>
<feature type="region of interest" description="Mediates interaction with PCM1" evidence="1">
    <location>
        <begin position="12"/>
        <end position="203"/>
    </location>
</feature>
<feature type="region of interest" description="Required for interaction with DAZ1" evidence="6">
    <location>
        <begin position="154"/>
        <end position="278"/>
    </location>
</feature>
<feature type="region of interest" description="Mediates interaction with GDI2 and RAB8A" evidence="1">
    <location>
        <begin position="446"/>
        <end position="617"/>
    </location>
</feature>
<feature type="region of interest" description="Disordered" evidence="4">
    <location>
        <begin position="643"/>
        <end position="768"/>
    </location>
</feature>
<feature type="region of interest" description="Disordered" evidence="4">
    <location>
        <begin position="796"/>
        <end position="867"/>
    </location>
</feature>
<feature type="coiled-coil region" evidence="2">
    <location>
        <begin position="230"/>
        <end position="340"/>
    </location>
</feature>
<feature type="coiled-coil region" evidence="2">
    <location>
        <begin position="401"/>
        <end position="445"/>
    </location>
</feature>
<feature type="coiled-coil region" evidence="2">
    <location>
        <begin position="568"/>
        <end position="588"/>
    </location>
</feature>
<feature type="compositionally biased region" description="Polar residues" evidence="4">
    <location>
        <begin position="643"/>
        <end position="654"/>
    </location>
</feature>
<feature type="compositionally biased region" description="Polar residues" evidence="4">
    <location>
        <begin position="671"/>
        <end position="680"/>
    </location>
</feature>
<feature type="compositionally biased region" description="Polar residues" evidence="4">
    <location>
        <begin position="708"/>
        <end position="718"/>
    </location>
</feature>
<feature type="compositionally biased region" description="Acidic residues" evidence="4">
    <location>
        <begin position="722"/>
        <end position="733"/>
    </location>
</feature>
<feature type="compositionally biased region" description="Basic and acidic residues" evidence="4">
    <location>
        <begin position="807"/>
        <end position="823"/>
    </location>
</feature>
<feature type="compositionally biased region" description="Low complexity" evidence="4">
    <location>
        <begin position="848"/>
        <end position="859"/>
    </location>
</feature>
<feature type="modified residue" description="Phosphoserine; by PLK1" evidence="1">
    <location>
        <position position="226"/>
    </location>
</feature>
<feature type="splice variant" id="VSP_010962" description="In isoform 3." evidence="15">
    <original>M</original>
    <variation>MVRGGRPGRPRRGCRAGENRGFPGPPAPQPARPPSPPPAALSLCPPQ</variation>
    <location>
        <position position="12"/>
    </location>
</feature>
<feature type="splice variant" id="VSP_010963" description="In isoform 3." evidence="15">
    <original>EYQ</original>
    <variation>GHL</variation>
    <location>
        <begin position="229"/>
        <end position="231"/>
    </location>
</feature>
<feature type="splice variant" id="VSP_010964" description="In isoform 3." evidence="15">
    <location>
        <begin position="232"/>
        <end position="867"/>
    </location>
</feature>
<feature type="splice variant" id="VSP_010965" description="In isoform 2." evidence="14">
    <original>GNPLAWQAFESQPAAPAVPM</original>
    <variation>V</variation>
    <location>
        <begin position="455"/>
        <end position="474"/>
    </location>
</feature>
<feature type="sequence variant" id="VAR_085517" description="In MVP3; decreased protein stability." evidence="12">
    <original>S</original>
    <variation>R</variation>
    <location>
        <position position="24"/>
    </location>
</feature>
<feature type="sequence variant" id="VAR_085518" description="In SPGF47; decreased protein abundance; loss of sperm flagellum assembly." evidence="13">
    <original>R</original>
    <variation>Q</variation>
    <location>
        <position position="63"/>
    </location>
</feature>
<feature type="sequence variant" id="VAR_052710" description="In dbSNP:rs9561921.">
    <original>T</original>
    <variation>M</variation>
    <location>
        <position position="172"/>
    </location>
</feature>
<feature type="sequence variant" id="VAR_085519" description="In SPGF47; decreased protein abundance; changed ciliary basal body organization; loss of sperm flagellum assembly." evidence="13">
    <location>
        <begin position="230"/>
        <end position="867"/>
    </location>
</feature>
<feature type="sequence variant" id="VAR_052711" description="In dbSNP:rs34303958.">
    <original>M</original>
    <variation>L</variation>
    <location>
        <position position="664"/>
    </location>
</feature>
<feature type="sequence variant" id="VAR_019456" description="In dbSNP:rs11070136." evidence="7">
    <original>P</original>
    <variation>S</variation>
    <location>
        <position position="736"/>
    </location>
</feature>
<feature type="sequence conflict" description="In Ref. 5; CAB43211." evidence="17" ref="5">
    <original>D</original>
    <variation>G</variation>
    <location>
        <position position="615"/>
    </location>
</feature>
<feature type="sequence conflict" description="In Ref. 5; CAB43211." evidence="17" ref="5">
    <original>KN</original>
    <variation>EK</variation>
    <location>
        <begin position="818"/>
        <end position="819"/>
    </location>
</feature>
<reference key="1">
    <citation type="journal article" date="2003" name="Proc. Natl. Acad. Sci. U.S.A.">
        <title>Human Pumilio-2 is expressed in embryonic stem cells and germ cells and interacts with DAZ (Deleted in AZoospermia) and DAZ-like proteins.</title>
        <authorList>
            <person name="Moore F.L."/>
            <person name="Jaruzelska J."/>
            <person name="Fox M.S."/>
            <person name="Urano J."/>
            <person name="Firpo M.T."/>
            <person name="Turek P.J."/>
            <person name="Dorfman D.M."/>
            <person name="Reijo Pera R.A."/>
        </authorList>
    </citation>
    <scope>NUCLEOTIDE SEQUENCE [MRNA] (ISOFORM 3)</scope>
    <scope>NUCLEOTIDE SEQUENCE OF 1-776 (ISOFORM 1)</scope>
    <scope>INTERACTION WITH DAZ1</scope>
</reference>
<reference key="2">
    <citation type="journal article" date="1999" name="DNA Res.">
        <title>Prediction of the coding sequences of unidentified human genes. XIII. The complete sequences of 100 new cDNA clones from brain which code for large proteins in vitro.</title>
        <authorList>
            <person name="Nagase T."/>
            <person name="Ishikawa K."/>
            <person name="Suyama M."/>
            <person name="Kikuno R."/>
            <person name="Hirosawa M."/>
            <person name="Miyajima N."/>
            <person name="Tanaka A."/>
            <person name="Kotani H."/>
            <person name="Nomura N."/>
            <person name="Ohara O."/>
        </authorList>
    </citation>
    <scope>NUCLEOTIDE SEQUENCE [LARGE SCALE MRNA] (ISOFORM 2)</scope>
    <source>
        <tissue>Brain</tissue>
    </source>
</reference>
<reference key="3">
    <citation type="journal article" date="2004" name="Nature">
        <title>The DNA sequence and analysis of human chromosome 13.</title>
        <authorList>
            <person name="Dunham A."/>
            <person name="Matthews L.H."/>
            <person name="Burton J."/>
            <person name="Ashurst J.L."/>
            <person name="Howe K.L."/>
            <person name="Ashcroft K.J."/>
            <person name="Beare D.M."/>
            <person name="Burford D.C."/>
            <person name="Hunt S.E."/>
            <person name="Griffiths-Jones S."/>
            <person name="Jones M.C."/>
            <person name="Keenan S.J."/>
            <person name="Oliver K."/>
            <person name="Scott C.E."/>
            <person name="Ainscough R."/>
            <person name="Almeida J.P."/>
            <person name="Ambrose K.D."/>
            <person name="Andrews D.T."/>
            <person name="Ashwell R.I.S."/>
            <person name="Babbage A.K."/>
            <person name="Bagguley C.L."/>
            <person name="Bailey J."/>
            <person name="Bannerjee R."/>
            <person name="Barlow K.F."/>
            <person name="Bates K."/>
            <person name="Beasley H."/>
            <person name="Bird C.P."/>
            <person name="Bray-Allen S."/>
            <person name="Brown A.J."/>
            <person name="Brown J.Y."/>
            <person name="Burrill W."/>
            <person name="Carder C."/>
            <person name="Carter N.P."/>
            <person name="Chapman J.C."/>
            <person name="Clamp M.E."/>
            <person name="Clark S.Y."/>
            <person name="Clarke G."/>
            <person name="Clee C.M."/>
            <person name="Clegg S.C."/>
            <person name="Cobley V."/>
            <person name="Collins J.E."/>
            <person name="Corby N."/>
            <person name="Coville G.J."/>
            <person name="Deloukas P."/>
            <person name="Dhami P."/>
            <person name="Dunham I."/>
            <person name="Dunn M."/>
            <person name="Earthrowl M.E."/>
            <person name="Ellington A.G."/>
            <person name="Faulkner L."/>
            <person name="Frankish A.G."/>
            <person name="Frankland J."/>
            <person name="French L."/>
            <person name="Garner P."/>
            <person name="Garnett J."/>
            <person name="Gilbert J.G.R."/>
            <person name="Gilson C.J."/>
            <person name="Ghori J."/>
            <person name="Grafham D.V."/>
            <person name="Gribble S.M."/>
            <person name="Griffiths C."/>
            <person name="Hall R.E."/>
            <person name="Hammond S."/>
            <person name="Harley J.L."/>
            <person name="Hart E.A."/>
            <person name="Heath P.D."/>
            <person name="Howden P.J."/>
            <person name="Huckle E.J."/>
            <person name="Hunt P.J."/>
            <person name="Hunt A.R."/>
            <person name="Johnson C."/>
            <person name="Johnson D."/>
            <person name="Kay M."/>
            <person name="Kimberley A.M."/>
            <person name="King A."/>
            <person name="Laird G.K."/>
            <person name="Langford C.J."/>
            <person name="Lawlor S."/>
            <person name="Leongamornlert D.A."/>
            <person name="Lloyd D.M."/>
            <person name="Lloyd C."/>
            <person name="Loveland J.E."/>
            <person name="Lovell J."/>
            <person name="Martin S."/>
            <person name="Mashreghi-Mohammadi M."/>
            <person name="McLaren S.J."/>
            <person name="McMurray A."/>
            <person name="Milne S."/>
            <person name="Moore M.J.F."/>
            <person name="Nickerson T."/>
            <person name="Palmer S.A."/>
            <person name="Pearce A.V."/>
            <person name="Peck A.I."/>
            <person name="Pelan S."/>
            <person name="Phillimore B."/>
            <person name="Porter K.M."/>
            <person name="Rice C.M."/>
            <person name="Searle S."/>
            <person name="Sehra H.K."/>
            <person name="Shownkeen R."/>
            <person name="Skuce C.D."/>
            <person name="Smith M."/>
            <person name="Steward C.A."/>
            <person name="Sycamore N."/>
            <person name="Tester J."/>
            <person name="Thomas D.W."/>
            <person name="Tracey A."/>
            <person name="Tromans A."/>
            <person name="Tubby B."/>
            <person name="Wall M."/>
            <person name="Wallis J.M."/>
            <person name="West A.P."/>
            <person name="Whitehead S.L."/>
            <person name="Willey D.L."/>
            <person name="Wilming L."/>
            <person name="Wray P.W."/>
            <person name="Wright M.W."/>
            <person name="Young L."/>
            <person name="Coulson A."/>
            <person name="Durbin R.M."/>
            <person name="Hubbard T."/>
            <person name="Sulston J.E."/>
            <person name="Beck S."/>
            <person name="Bentley D.R."/>
            <person name="Rogers J."/>
            <person name="Ross M.T."/>
        </authorList>
    </citation>
    <scope>NUCLEOTIDE SEQUENCE [LARGE SCALE GENOMIC DNA]</scope>
</reference>
<reference key="4">
    <citation type="journal article" date="2004" name="Genome Res.">
        <title>The status, quality, and expansion of the NIH full-length cDNA project: the Mammalian Gene Collection (MGC).</title>
        <authorList>
            <consortium name="The MGC Project Team"/>
        </authorList>
    </citation>
    <scope>NUCLEOTIDE SEQUENCE [LARGE SCALE MRNA] (ISOFORM 1)</scope>
    <source>
        <tissue>Testis</tissue>
    </source>
</reference>
<reference key="5">
    <citation type="journal article" date="2007" name="BMC Genomics">
        <title>The full-ORF clone resource of the German cDNA consortium.</title>
        <authorList>
            <person name="Bechtel S."/>
            <person name="Rosenfelder H."/>
            <person name="Duda A."/>
            <person name="Schmidt C.P."/>
            <person name="Ernst U."/>
            <person name="Wellenreuther R."/>
            <person name="Mehrle A."/>
            <person name="Schuster C."/>
            <person name="Bahr A."/>
            <person name="Bloecker H."/>
            <person name="Heubner D."/>
            <person name="Hoerlein A."/>
            <person name="Michel G."/>
            <person name="Wedler H."/>
            <person name="Koehrer K."/>
            <person name="Ottenwaelder B."/>
            <person name="Poustka A."/>
            <person name="Wiemann S."/>
            <person name="Schupp I."/>
        </authorList>
    </citation>
    <scope>NUCLEOTIDE SEQUENCE [LARGE SCALE MRNA] OF 615-867</scope>
    <scope>VARIANT SER-736</scope>
    <source>
        <tissue>Brain</tissue>
    </source>
</reference>
<reference key="6">
    <citation type="journal article" date="2004" name="Genomics">
        <title>Identification of a novel gene, DZIP (DAZ-interacting protein), that encodes a protein that interacts with DAZ (deleted in azoospermia) and is expressed in embryonic stem cells and germ cells.</title>
        <authorList>
            <person name="Moore F.L."/>
            <person name="Jaruzelska J."/>
            <person name="Dorfman D.M."/>
            <person name="Reijo-Pera R.A."/>
        </authorList>
    </citation>
    <scope>INTERACTION WITH DAZ1</scope>
    <scope>SUBCELLULAR LOCATION</scope>
    <scope>ALTERNATIVE SPLICING</scope>
    <scope>TISSUE SPECIFICITY</scope>
    <scope>REGION</scope>
</reference>
<reference key="7">
    <citation type="journal article" date="2010" name="Dev. Biol.">
        <title>The Zn finger protein Iguana impacts Hedgehog signaling by promoting ciliogenesis.</title>
        <authorList>
            <person name="Glazer A.M."/>
            <person name="Wilkinson A.W."/>
            <person name="Backer C.B."/>
            <person name="Lapan S.W."/>
            <person name="Gutzman J.H."/>
            <person name="Cheeseman I.M."/>
            <person name="Reddien P.W."/>
        </authorList>
    </citation>
    <scope>FUNCTION</scope>
    <scope>SUBCELLULAR LOCATION</scope>
</reference>
<reference key="8">
    <citation type="journal article" date="2013" name="J. Biol. Chem.">
        <title>Centrosomal protein DZIP1 regulates Hedgehog signaling by promoting cytoplasmic retention of transcription factor GLI3 and affecting ciliogenesis.</title>
        <authorList>
            <person name="Wang C."/>
            <person name="Low W.C."/>
            <person name="Liu A."/>
            <person name="Wang B."/>
        </authorList>
    </citation>
    <scope>FUNCTION</scope>
    <scope>INTERACTION WITH GLI3</scope>
</reference>
<reference key="9">
    <citation type="journal article" date="2015" name="PLoS Biol.">
        <title>GSK3beta-Dzip1-Rab8 cascade regulates ciliogenesis after mitosis.</title>
        <authorList>
            <person name="Zhang B."/>
            <person name="Zhang T."/>
            <person name="Wang G."/>
            <person name="Wang G."/>
            <person name="Chi W."/>
            <person name="Jiang Q."/>
            <person name="Zhang C."/>
        </authorList>
    </citation>
    <scope>INTERACTION WITH GDI2 AND RAB8A</scope>
</reference>
<reference key="10">
    <citation type="journal article" date="2017" name="J. Biol. Chem.">
        <title>DAZ-interacting Protein 1 (Dzip1) Phosphorylation by Polo-like Kinase 1 (Plk1) Regulates the Centriolar Satellite Localization of the BBSome Protein during the Cell Cycle.</title>
        <authorList>
            <person name="Zhang B."/>
            <person name="Wang G."/>
            <person name="Xu X."/>
            <person name="Yang S."/>
            <person name="Zhuang T."/>
            <person name="Wang G."/>
            <person name="Ren H."/>
            <person name="Cheng S.Y."/>
            <person name="Jiang Q."/>
            <person name="Zhang C."/>
        </authorList>
    </citation>
    <scope>FUNCTION</scope>
    <scope>SUBUNIT</scope>
    <scope>INTERACTION WITH PCM1</scope>
    <scope>SUBCELLULAR LOCATION</scope>
</reference>
<reference key="11">
    <citation type="journal article" date="2019" name="Sci. Transl. Med.">
        <title>Primary cilia defects causing mitral valve prolapse.</title>
        <authorList>
            <person name="Toomer K.A."/>
            <person name="Yu M."/>
            <person name="Fulmer D."/>
            <person name="Guo L."/>
            <person name="Moore K.S."/>
            <person name="Moore R."/>
            <person name="Drayton K.D."/>
            <person name="Glover J."/>
            <person name="Peterson N."/>
            <person name="Ramos-Ortiz S."/>
            <person name="Drohan A."/>
            <person name="Catching B.J."/>
            <person name="Stairley R."/>
            <person name="Wessels A."/>
            <person name="Lipschutz J.H."/>
            <person name="Delling F.N."/>
            <person name="Jeunemaitre X."/>
            <person name="Dina C."/>
            <person name="Collins R.L."/>
            <person name="Brand H."/>
            <person name="Talkowski M.E."/>
            <person name="Del Monte F."/>
            <person name="Mukherjee R."/>
            <person name="Awgulewitsch A."/>
            <person name="Body S."/>
            <person name="Hardiman G."/>
            <person name="Hazard E.S."/>
            <person name="da Silveira W.A."/>
            <person name="Wang B."/>
            <person name="Leyne M."/>
            <person name="Durst R."/>
            <person name="Markwald R.R."/>
            <person name="Le Scouarnec S."/>
            <person name="Hagege A."/>
            <person name="Le Tourneau T."/>
            <person name="Kohl P."/>
            <person name="Rog-Zielinska E.A."/>
            <person name="Ellinor P.T."/>
            <person name="Levine R.A."/>
            <person name="Milan D.J."/>
            <person name="Schott J.J."/>
            <person name="Bouatia-Naji N."/>
            <person name="Slaugenhaupt S.A."/>
            <person name="Norris R.A."/>
        </authorList>
    </citation>
    <scope>INVOLVEMENT IN MVP3</scope>
    <scope>VARIANT MVP3 ARG-24</scope>
    <scope>CHARACTERIZATION OF VARIANT MVP3 ARG-24</scope>
    <scope>FUNCTION</scope>
</reference>
<reference key="12">
    <citation type="journal article" date="2020" name="J. Med. Genet.">
        <title>Homozygous mutations in DZIP1 can induce asthenoteratospermia with severe MMAF.</title>
        <authorList>
            <person name="Lv M."/>
            <person name="Liu W."/>
            <person name="Chi W."/>
            <person name="Ni X."/>
            <person name="Wang J."/>
            <person name="Cheng H."/>
            <person name="Li W.Y."/>
            <person name="Yang S."/>
            <person name="Wu H."/>
            <person name="Zhang J."/>
            <person name="Gao Y."/>
            <person name="Liu C."/>
            <person name="Li C."/>
            <person name="Yang C."/>
            <person name="Tan Q."/>
            <person name="Tang D."/>
            <person name="Zhang J."/>
            <person name="Song B."/>
            <person name="Chen Y.J."/>
            <person name="Li Q."/>
            <person name="Zhong Y."/>
            <person name="Zhang Z."/>
            <person name="Saiyin H."/>
            <person name="Jin L."/>
            <person name="Xu Y."/>
            <person name="Zhou P."/>
            <person name="Wei Z."/>
            <person name="Zhang C."/>
            <person name="He X."/>
            <person name="Zhang F."/>
            <person name="Cao Y."/>
        </authorList>
    </citation>
    <scope>INVOLVEMENT IN SPGF47</scope>
    <scope>VARIANTS SPGF47 GLN-63 AND 230-TYR--VAL-867 DEL</scope>
    <scope>CHARACTERIZATION OF VARIANTS SPGF47 GLN-63 AND 230-TYR--VAL-867 DEL</scope>
    <scope>FUNCTION</scope>
    <scope>TISSUE SPECIFICITY</scope>
</reference>
<accession>Q86YF9</accession>
<accession>Q5W078</accession>
<accession>Q5W079</accession>
<accession>Q8WY45</accession>
<accession>Q8WY46</accession>
<accession>Q9UGA5</accession>
<accession>Q9Y2K0</accession>
<keyword id="KW-0025">Alternative splicing</keyword>
<keyword id="KW-0966">Cell projection</keyword>
<keyword id="KW-0969">Cilium</keyword>
<keyword id="KW-0970">Cilium biogenesis/degradation</keyword>
<keyword id="KW-0175">Coiled coil</keyword>
<keyword id="KW-0963">Cytoplasm</keyword>
<keyword id="KW-0206">Cytoskeleton</keyword>
<keyword id="KW-0217">Developmental protein</keyword>
<keyword id="KW-0221">Differentiation</keyword>
<keyword id="KW-0225">Disease variant</keyword>
<keyword id="KW-0479">Metal-binding</keyword>
<keyword id="KW-0539">Nucleus</keyword>
<keyword id="KW-0597">Phosphoprotein</keyword>
<keyword id="KW-1267">Proteomics identification</keyword>
<keyword id="KW-1185">Reference proteome</keyword>
<keyword id="KW-0744">Spermatogenesis</keyword>
<keyword id="KW-0862">Zinc</keyword>
<keyword id="KW-0863">Zinc-finger</keyword>